<feature type="chain" id="PRO_0000367975" description="Probable protein phosphatase 2C 51">
    <location>
        <begin position="1"/>
        <end position="528"/>
    </location>
</feature>
<feature type="transmembrane region" description="Helical" evidence="2">
    <location>
        <begin position="8"/>
        <end position="28"/>
    </location>
</feature>
<feature type="domain" description="PPM-type phosphatase" evidence="3">
    <location>
        <begin position="71"/>
        <end position="445"/>
    </location>
</feature>
<feature type="binding site" evidence="1">
    <location>
        <position position="117"/>
    </location>
    <ligand>
        <name>Mn(2+)</name>
        <dbReference type="ChEBI" id="CHEBI:29035"/>
        <label>1</label>
    </ligand>
</feature>
<feature type="binding site" evidence="1">
    <location>
        <position position="117"/>
    </location>
    <ligand>
        <name>Mn(2+)</name>
        <dbReference type="ChEBI" id="CHEBI:29035"/>
        <label>2</label>
    </ligand>
</feature>
<feature type="binding site" evidence="1">
    <location>
        <position position="118"/>
    </location>
    <ligand>
        <name>Mn(2+)</name>
        <dbReference type="ChEBI" id="CHEBI:29035"/>
        <label>1</label>
    </ligand>
</feature>
<feature type="binding site" evidence="1">
    <location>
        <position position="385"/>
    </location>
    <ligand>
        <name>Mn(2+)</name>
        <dbReference type="ChEBI" id="CHEBI:29035"/>
        <label>2</label>
    </ligand>
</feature>
<feature type="binding site" evidence="1">
    <location>
        <position position="436"/>
    </location>
    <ligand>
        <name>Mn(2+)</name>
        <dbReference type="ChEBI" id="CHEBI:29035"/>
        <label>2</label>
    </ligand>
</feature>
<feature type="sequence conflict" description="In Ref. 3; AAL24137." evidence="4" ref="3">
    <original>D</original>
    <variation>G</variation>
    <location>
        <position position="199"/>
    </location>
</feature>
<sequence>MTSSIKSSLLNLGLLIIFFVFFFLVINCRGESSTCLAVYKQGGAPAVFQSPKCPRWILQNWGSPTHSGAGRCHTAAIQGRRNYQEDRLLCALDLRIPFPGKTGTPKDVLVGIAAVFDGHNGAEASDMASKLLLDYFALHINFLLDATFSAMTRKLIGRFPTKGDHSVILHGVSRDEIMHLYNLDFQMQFRDSLPLHFDDSLPLDIMKEALLRAIHDIDVTFTKEASNRKLNSGSTATIALIADGQLMVASIGDSKALLCSEKFETLEEARATLVKLYRERRRNRGSSPSRFSDFKLEHGNGLLRFIAKELTKDHHPNREDEKIRVEAAGGYVTEWAGVPRVNGQLTVSRAIGDLTYRSYGVISAPEVMDWQPLVANDSFLVVSSDGIFEKLEVQEVCDLLWEVNNQTSSGAGVPSYCSISLADCLVNTAFEKGSMDNMAAVVVPLKSNLVTQLQRKEQSMNDNKDKIASALPCSNCTLPLPNDINLGPLQLKQAQPLGTMFNRLLRLKTEVFAAFICQRTLLGHLKGK</sequence>
<accession>Q93YS2</accession>
<accession>F4J0Z1</accession>
<accession>F4J0Z2</accession>
<accession>Q9M1V6</accession>
<gene>
    <name type="ordered locus">At3g63340</name>
    <name type="ORF">F16M2.190</name>
    <name type="ORF">MAA21.3</name>
</gene>
<evidence type="ECO:0000250" key="1"/>
<evidence type="ECO:0000255" key="2"/>
<evidence type="ECO:0000255" key="3">
    <source>
        <dbReference type="PROSITE-ProRule" id="PRU01082"/>
    </source>
</evidence>
<evidence type="ECO:0000305" key="4"/>
<name>P2C51_ARATH</name>
<comment type="catalytic activity">
    <reaction>
        <text>O-phospho-L-seryl-[protein] + H2O = L-seryl-[protein] + phosphate</text>
        <dbReference type="Rhea" id="RHEA:20629"/>
        <dbReference type="Rhea" id="RHEA-COMP:9863"/>
        <dbReference type="Rhea" id="RHEA-COMP:11604"/>
        <dbReference type="ChEBI" id="CHEBI:15377"/>
        <dbReference type="ChEBI" id="CHEBI:29999"/>
        <dbReference type="ChEBI" id="CHEBI:43474"/>
        <dbReference type="ChEBI" id="CHEBI:83421"/>
        <dbReference type="EC" id="3.1.3.16"/>
    </reaction>
</comment>
<comment type="catalytic activity">
    <reaction>
        <text>O-phospho-L-threonyl-[protein] + H2O = L-threonyl-[protein] + phosphate</text>
        <dbReference type="Rhea" id="RHEA:47004"/>
        <dbReference type="Rhea" id="RHEA-COMP:11060"/>
        <dbReference type="Rhea" id="RHEA-COMP:11605"/>
        <dbReference type="ChEBI" id="CHEBI:15377"/>
        <dbReference type="ChEBI" id="CHEBI:30013"/>
        <dbReference type="ChEBI" id="CHEBI:43474"/>
        <dbReference type="ChEBI" id="CHEBI:61977"/>
        <dbReference type="EC" id="3.1.3.16"/>
    </reaction>
</comment>
<comment type="cofactor">
    <cofactor evidence="1">
        <name>Mg(2+)</name>
        <dbReference type="ChEBI" id="CHEBI:18420"/>
    </cofactor>
    <cofactor evidence="1">
        <name>Mn(2+)</name>
        <dbReference type="ChEBI" id="CHEBI:29035"/>
    </cofactor>
    <text evidence="1">Binds 2 magnesium or manganese ions per subunit.</text>
</comment>
<comment type="subcellular location">
    <subcellularLocation>
        <location evidence="4">Membrane</location>
        <topology evidence="4">Single-pass membrane protein</topology>
    </subcellularLocation>
</comment>
<comment type="alternative products">
    <event type="alternative splicing"/>
    <isoform>
        <id>Q93YS2-1</id>
        <name>1</name>
        <sequence type="displayed"/>
    </isoform>
    <text>A number of isoforms are produced. According to EST sequences.</text>
</comment>
<comment type="similarity">
    <text evidence="4">Belongs to the PP2C family.</text>
</comment>
<comment type="sequence caution" evidence="4">
    <conflict type="erroneous gene model prediction">
        <sequence resource="EMBL-CDS" id="AEE80468"/>
    </conflict>
    <text>The predicted gene has been split into 2 genes: At3g63330 and At3g63340.</text>
</comment>
<comment type="sequence caution" evidence="4">
    <conflict type="erroneous gene model prediction">
        <sequence resource="EMBL-CDS" id="AEE80469"/>
    </conflict>
    <text>The predicted gene has been split into 2 genes: At3g63330 and At3g63340.</text>
</comment>
<comment type="sequence caution" evidence="4">
    <conflict type="erroneous gene model prediction">
        <sequence resource="EMBL-CDS" id="CAB86435"/>
    </conflict>
    <text>The predicted gene has been split into 2 genes: At3g63330 and At3g63340.</text>
</comment>
<proteinExistence type="evidence at transcript level"/>
<protein>
    <recommendedName>
        <fullName>Probable protein phosphatase 2C 51</fullName>
        <shortName>AtPP2C51</shortName>
        <ecNumber>3.1.3.16</ecNumber>
    </recommendedName>
</protein>
<keyword id="KW-0025">Alternative splicing</keyword>
<keyword id="KW-0378">Hydrolase</keyword>
<keyword id="KW-0460">Magnesium</keyword>
<keyword id="KW-0464">Manganese</keyword>
<keyword id="KW-0472">Membrane</keyword>
<keyword id="KW-0479">Metal-binding</keyword>
<keyword id="KW-0904">Protein phosphatase</keyword>
<keyword id="KW-1185">Reference proteome</keyword>
<keyword id="KW-0812">Transmembrane</keyword>
<keyword id="KW-1133">Transmembrane helix</keyword>
<dbReference type="EC" id="3.1.3.16"/>
<dbReference type="EMBL" id="AL138648">
    <property type="protein sequence ID" value="CAB86435.1"/>
    <property type="status" value="ALT_SEQ"/>
    <property type="molecule type" value="Genomic_DNA"/>
</dbReference>
<dbReference type="EMBL" id="CP002686">
    <property type="protein sequence ID" value="AEE80468.1"/>
    <property type="status" value="ALT_SEQ"/>
    <property type="molecule type" value="Genomic_DNA"/>
</dbReference>
<dbReference type="EMBL" id="CP002686">
    <property type="protein sequence ID" value="AEE80469.1"/>
    <property type="status" value="ALT_SEQ"/>
    <property type="molecule type" value="Genomic_DNA"/>
</dbReference>
<dbReference type="EMBL" id="CP002686">
    <property type="protein sequence ID" value="ANM64224.1"/>
    <property type="molecule type" value="Genomic_DNA"/>
</dbReference>
<dbReference type="EMBL" id="AY059789">
    <property type="protein sequence ID" value="AAL24137.1"/>
    <property type="molecule type" value="mRNA"/>
</dbReference>
<dbReference type="PIR" id="T48123">
    <property type="entry name" value="T48123"/>
</dbReference>
<dbReference type="RefSeq" id="NP_001326269.1">
    <molecule id="Q93YS2-1"/>
    <property type="nucleotide sequence ID" value="NM_001340203.1"/>
</dbReference>
<dbReference type="SMR" id="Q93YS2"/>
<dbReference type="FunCoup" id="Q93YS2">
    <property type="interactions" value="515"/>
</dbReference>
<dbReference type="STRING" id="3702.Q93YS2"/>
<dbReference type="iPTMnet" id="Q93YS2"/>
<dbReference type="PaxDb" id="3702-AT3G63340.2"/>
<dbReference type="ProteomicsDB" id="248719">
    <molecule id="Q93YS2-1"/>
</dbReference>
<dbReference type="EnsemblPlants" id="AT3G63340.12">
    <molecule id="Q93YS2-1"/>
    <property type="protein sequence ID" value="AT3G63340.12"/>
    <property type="gene ID" value="AT3G63340"/>
</dbReference>
<dbReference type="GeneID" id="825509"/>
<dbReference type="Gramene" id="AT3G63340.12">
    <molecule id="Q93YS2-1"/>
    <property type="protein sequence ID" value="AT3G63340.12"/>
    <property type="gene ID" value="AT3G63340"/>
</dbReference>
<dbReference type="KEGG" id="ath:AT3G63340"/>
<dbReference type="Araport" id="AT3G63340"/>
<dbReference type="TAIR" id="AT3G63340"/>
<dbReference type="eggNOG" id="KOG0698">
    <property type="taxonomic scope" value="Eukaryota"/>
</dbReference>
<dbReference type="HOGENOM" id="CLU_012110_0_0_1"/>
<dbReference type="InParanoid" id="Q93YS2"/>
<dbReference type="PhylomeDB" id="Q93YS2"/>
<dbReference type="PRO" id="PR:Q93YS2"/>
<dbReference type="Proteomes" id="UP000006548">
    <property type="component" value="Chromosome 3"/>
</dbReference>
<dbReference type="ExpressionAtlas" id="Q93YS2">
    <property type="expression patterns" value="baseline and differential"/>
</dbReference>
<dbReference type="GO" id="GO:0016020">
    <property type="term" value="C:membrane"/>
    <property type="evidence" value="ECO:0007669"/>
    <property type="project" value="UniProtKB-SubCell"/>
</dbReference>
<dbReference type="GO" id="GO:0046872">
    <property type="term" value="F:metal ion binding"/>
    <property type="evidence" value="ECO:0007669"/>
    <property type="project" value="UniProtKB-KW"/>
</dbReference>
<dbReference type="GO" id="GO:0004722">
    <property type="term" value="F:protein serine/threonine phosphatase activity"/>
    <property type="evidence" value="ECO:0007669"/>
    <property type="project" value="UniProtKB-EC"/>
</dbReference>
<dbReference type="CDD" id="cd00143">
    <property type="entry name" value="PP2Cc"/>
    <property type="match status" value="1"/>
</dbReference>
<dbReference type="Gene3D" id="3.60.40.10">
    <property type="entry name" value="PPM-type phosphatase domain"/>
    <property type="match status" value="1"/>
</dbReference>
<dbReference type="InterPro" id="IPR015655">
    <property type="entry name" value="PP2C"/>
</dbReference>
<dbReference type="InterPro" id="IPR036457">
    <property type="entry name" value="PPM-type-like_dom_sf"/>
</dbReference>
<dbReference type="InterPro" id="IPR001932">
    <property type="entry name" value="PPM-type_phosphatase-like_dom"/>
</dbReference>
<dbReference type="PANTHER" id="PTHR47992">
    <property type="entry name" value="PROTEIN PHOSPHATASE"/>
    <property type="match status" value="1"/>
</dbReference>
<dbReference type="Pfam" id="PF00481">
    <property type="entry name" value="PP2C"/>
    <property type="match status" value="2"/>
</dbReference>
<dbReference type="SMART" id="SM00332">
    <property type="entry name" value="PP2Cc"/>
    <property type="match status" value="1"/>
</dbReference>
<dbReference type="SUPFAM" id="SSF81606">
    <property type="entry name" value="PP2C-like"/>
    <property type="match status" value="1"/>
</dbReference>
<dbReference type="PROSITE" id="PS51746">
    <property type="entry name" value="PPM_2"/>
    <property type="match status" value="1"/>
</dbReference>
<reference key="1">
    <citation type="journal article" date="2000" name="Nature">
        <title>Sequence and analysis of chromosome 3 of the plant Arabidopsis thaliana.</title>
        <authorList>
            <person name="Salanoubat M."/>
            <person name="Lemcke K."/>
            <person name="Rieger M."/>
            <person name="Ansorge W."/>
            <person name="Unseld M."/>
            <person name="Fartmann B."/>
            <person name="Valle G."/>
            <person name="Bloecker H."/>
            <person name="Perez-Alonso M."/>
            <person name="Obermaier B."/>
            <person name="Delseny M."/>
            <person name="Boutry M."/>
            <person name="Grivell L.A."/>
            <person name="Mache R."/>
            <person name="Puigdomenech P."/>
            <person name="De Simone V."/>
            <person name="Choisne N."/>
            <person name="Artiguenave F."/>
            <person name="Robert C."/>
            <person name="Brottier P."/>
            <person name="Wincker P."/>
            <person name="Cattolico L."/>
            <person name="Weissenbach J."/>
            <person name="Saurin W."/>
            <person name="Quetier F."/>
            <person name="Schaefer M."/>
            <person name="Mueller-Auer S."/>
            <person name="Gabel C."/>
            <person name="Fuchs M."/>
            <person name="Benes V."/>
            <person name="Wurmbach E."/>
            <person name="Drzonek H."/>
            <person name="Erfle H."/>
            <person name="Jordan N."/>
            <person name="Bangert S."/>
            <person name="Wiedelmann R."/>
            <person name="Kranz H."/>
            <person name="Voss H."/>
            <person name="Holland R."/>
            <person name="Brandt P."/>
            <person name="Nyakatura G."/>
            <person name="Vezzi A."/>
            <person name="D'Angelo M."/>
            <person name="Pallavicini A."/>
            <person name="Toppo S."/>
            <person name="Simionati B."/>
            <person name="Conrad A."/>
            <person name="Hornischer K."/>
            <person name="Kauer G."/>
            <person name="Loehnert T.-H."/>
            <person name="Nordsiek G."/>
            <person name="Reichelt J."/>
            <person name="Scharfe M."/>
            <person name="Schoen O."/>
            <person name="Bargues M."/>
            <person name="Terol J."/>
            <person name="Climent J."/>
            <person name="Navarro P."/>
            <person name="Collado C."/>
            <person name="Perez-Perez A."/>
            <person name="Ottenwaelder B."/>
            <person name="Duchemin D."/>
            <person name="Cooke R."/>
            <person name="Laudie M."/>
            <person name="Berger-Llauro C."/>
            <person name="Purnelle B."/>
            <person name="Masuy D."/>
            <person name="de Haan M."/>
            <person name="Maarse A.C."/>
            <person name="Alcaraz J.-P."/>
            <person name="Cottet A."/>
            <person name="Casacuberta E."/>
            <person name="Monfort A."/>
            <person name="Argiriou A."/>
            <person name="Flores M."/>
            <person name="Liguori R."/>
            <person name="Vitale D."/>
            <person name="Mannhaupt G."/>
            <person name="Haase D."/>
            <person name="Schoof H."/>
            <person name="Rudd S."/>
            <person name="Zaccaria P."/>
            <person name="Mewes H.-W."/>
            <person name="Mayer K.F.X."/>
            <person name="Kaul S."/>
            <person name="Town C.D."/>
            <person name="Koo H.L."/>
            <person name="Tallon L.J."/>
            <person name="Jenkins J."/>
            <person name="Rooney T."/>
            <person name="Rizzo M."/>
            <person name="Walts A."/>
            <person name="Utterback T."/>
            <person name="Fujii C.Y."/>
            <person name="Shea T.P."/>
            <person name="Creasy T.H."/>
            <person name="Haas B."/>
            <person name="Maiti R."/>
            <person name="Wu D."/>
            <person name="Peterson J."/>
            <person name="Van Aken S."/>
            <person name="Pai G."/>
            <person name="Militscher J."/>
            <person name="Sellers P."/>
            <person name="Gill J.E."/>
            <person name="Feldblyum T.V."/>
            <person name="Preuss D."/>
            <person name="Lin X."/>
            <person name="Nierman W.C."/>
            <person name="Salzberg S.L."/>
            <person name="White O."/>
            <person name="Venter J.C."/>
            <person name="Fraser C.M."/>
            <person name="Kaneko T."/>
            <person name="Nakamura Y."/>
            <person name="Sato S."/>
            <person name="Kato T."/>
            <person name="Asamizu E."/>
            <person name="Sasamoto S."/>
            <person name="Kimura T."/>
            <person name="Idesawa K."/>
            <person name="Kawashima K."/>
            <person name="Kishida Y."/>
            <person name="Kiyokawa C."/>
            <person name="Kohara M."/>
            <person name="Matsumoto M."/>
            <person name="Matsuno A."/>
            <person name="Muraki A."/>
            <person name="Nakayama S."/>
            <person name="Nakazaki N."/>
            <person name="Shinpo S."/>
            <person name="Takeuchi C."/>
            <person name="Wada T."/>
            <person name="Watanabe A."/>
            <person name="Yamada M."/>
            <person name="Yasuda M."/>
            <person name="Tabata S."/>
        </authorList>
    </citation>
    <scope>NUCLEOTIDE SEQUENCE [LARGE SCALE GENOMIC DNA]</scope>
    <source>
        <strain>cv. Columbia</strain>
    </source>
</reference>
<reference key="2">
    <citation type="journal article" date="2017" name="Plant J.">
        <title>Araport11: a complete reannotation of the Arabidopsis thaliana reference genome.</title>
        <authorList>
            <person name="Cheng C.Y."/>
            <person name="Krishnakumar V."/>
            <person name="Chan A.P."/>
            <person name="Thibaud-Nissen F."/>
            <person name="Schobel S."/>
            <person name="Town C.D."/>
        </authorList>
    </citation>
    <scope>GENOME REANNOTATION</scope>
    <source>
        <strain>cv. Columbia</strain>
    </source>
</reference>
<reference key="3">
    <citation type="journal article" date="2003" name="Science">
        <title>Empirical analysis of transcriptional activity in the Arabidopsis genome.</title>
        <authorList>
            <person name="Yamada K."/>
            <person name="Lim J."/>
            <person name="Dale J.M."/>
            <person name="Chen H."/>
            <person name="Shinn P."/>
            <person name="Palm C.J."/>
            <person name="Southwick A.M."/>
            <person name="Wu H.C."/>
            <person name="Kim C.J."/>
            <person name="Nguyen M."/>
            <person name="Pham P.K."/>
            <person name="Cheuk R.F."/>
            <person name="Karlin-Newmann G."/>
            <person name="Liu S.X."/>
            <person name="Lam B."/>
            <person name="Sakano H."/>
            <person name="Wu T."/>
            <person name="Yu G."/>
            <person name="Miranda M."/>
            <person name="Quach H.L."/>
            <person name="Tripp M."/>
            <person name="Chang C.H."/>
            <person name="Lee J.M."/>
            <person name="Toriumi M.J."/>
            <person name="Chan M.M."/>
            <person name="Tang C.C."/>
            <person name="Onodera C.S."/>
            <person name="Deng J.M."/>
            <person name="Akiyama K."/>
            <person name="Ansari Y."/>
            <person name="Arakawa T."/>
            <person name="Banh J."/>
            <person name="Banno F."/>
            <person name="Bowser L."/>
            <person name="Brooks S.Y."/>
            <person name="Carninci P."/>
            <person name="Chao Q."/>
            <person name="Choy N."/>
            <person name="Enju A."/>
            <person name="Goldsmith A.D."/>
            <person name="Gurjal M."/>
            <person name="Hansen N.F."/>
            <person name="Hayashizaki Y."/>
            <person name="Johnson-Hopson C."/>
            <person name="Hsuan V.W."/>
            <person name="Iida K."/>
            <person name="Karnes M."/>
            <person name="Khan S."/>
            <person name="Koesema E."/>
            <person name="Ishida J."/>
            <person name="Jiang P.X."/>
            <person name="Jones T."/>
            <person name="Kawai J."/>
            <person name="Kamiya A."/>
            <person name="Meyers C."/>
            <person name="Nakajima M."/>
            <person name="Narusaka M."/>
            <person name="Seki M."/>
            <person name="Sakurai T."/>
            <person name="Satou M."/>
            <person name="Tamse R."/>
            <person name="Vaysberg M."/>
            <person name="Wallender E.K."/>
            <person name="Wong C."/>
            <person name="Yamamura Y."/>
            <person name="Yuan S."/>
            <person name="Shinozaki K."/>
            <person name="Davis R.W."/>
            <person name="Theologis A."/>
            <person name="Ecker J.R."/>
        </authorList>
    </citation>
    <scope>NUCLEOTIDE SEQUENCE [LARGE SCALE MRNA]</scope>
    <source>
        <strain>cv. Columbia</strain>
    </source>
</reference>
<reference key="4">
    <citation type="journal article" date="2008" name="BMC Genomics">
        <title>Genome-wide and expression analysis of protein phosphatase 2C in rice and Arabidopsis.</title>
        <authorList>
            <person name="Xue T."/>
            <person name="Wang D."/>
            <person name="Zhang S."/>
            <person name="Ehlting J."/>
            <person name="Ni F."/>
            <person name="Jacab S."/>
            <person name="Zheng C."/>
            <person name="Zhong Y."/>
        </authorList>
    </citation>
    <scope>GENE FAMILY</scope>
    <scope>NOMENCLATURE</scope>
</reference>
<organism>
    <name type="scientific">Arabidopsis thaliana</name>
    <name type="common">Mouse-ear cress</name>
    <dbReference type="NCBI Taxonomy" id="3702"/>
    <lineage>
        <taxon>Eukaryota</taxon>
        <taxon>Viridiplantae</taxon>
        <taxon>Streptophyta</taxon>
        <taxon>Embryophyta</taxon>
        <taxon>Tracheophyta</taxon>
        <taxon>Spermatophyta</taxon>
        <taxon>Magnoliopsida</taxon>
        <taxon>eudicotyledons</taxon>
        <taxon>Gunneridae</taxon>
        <taxon>Pentapetalae</taxon>
        <taxon>rosids</taxon>
        <taxon>malvids</taxon>
        <taxon>Brassicales</taxon>
        <taxon>Brassicaceae</taxon>
        <taxon>Camelineae</taxon>
        <taxon>Arabidopsis</taxon>
    </lineage>
</organism>